<feature type="chain" id="PRO_0000129333" description="Large ribosomal subunit protein uL4">
    <location>
        <begin position="1"/>
        <end position="260"/>
    </location>
</feature>
<sequence>MEAPVFNLEGEEVDTVELPSFFEEPVRKDLIRRAVLAAQANRRQPYGTDPRAGFRTSAESWGAGHGVAMVPRVKGRRHPAAGRAARVAQAVGGQKAHAPTPEKDWTQRVNRKERRAALRSALAATAKPEFVKERGHVIDDVPHLPVVVVDELKSLNKAREVREFFKSVGLWADVERAKSNRRIRAGKGKRRGRRYVKPKSVLIVVDEDEGIKLGARNHPGVDVVEAMHLGVEHLAPGAHPGRLTVFTPGALEVLEERLGE</sequence>
<organism>
    <name type="scientific">Methanopyrus kandleri (strain AV19 / DSM 6324 / JCM 9639 / NBRC 100938)</name>
    <dbReference type="NCBI Taxonomy" id="190192"/>
    <lineage>
        <taxon>Archaea</taxon>
        <taxon>Methanobacteriati</taxon>
        <taxon>Methanobacteriota</taxon>
        <taxon>Methanomada group</taxon>
        <taxon>Methanopyri</taxon>
        <taxon>Methanopyrales</taxon>
        <taxon>Methanopyraceae</taxon>
        <taxon>Methanopyrus</taxon>
    </lineage>
</organism>
<comment type="function">
    <text evidence="1">One of the primary rRNA binding proteins, this protein initially binds near the 5'-end of the 23S rRNA. It is important during the early stages of 50S assembly. It makes multiple contacts with different domains of the 23S rRNA in the assembled 50S subunit and ribosome.</text>
</comment>
<comment type="function">
    <text evidence="1">Forms part of the polypeptide exit tunnel.</text>
</comment>
<comment type="subunit">
    <text evidence="1">Part of the 50S ribosomal subunit.</text>
</comment>
<comment type="similarity">
    <text evidence="1">Belongs to the universal ribosomal protein uL4 family.</text>
</comment>
<accession>Q8TY91</accession>
<name>RL4_METKA</name>
<keyword id="KW-1185">Reference proteome</keyword>
<keyword id="KW-0687">Ribonucleoprotein</keyword>
<keyword id="KW-0689">Ribosomal protein</keyword>
<keyword id="KW-0694">RNA-binding</keyword>
<keyword id="KW-0699">rRNA-binding</keyword>
<proteinExistence type="inferred from homology"/>
<protein>
    <recommendedName>
        <fullName evidence="1">Large ribosomal subunit protein uL4</fullName>
    </recommendedName>
    <alternativeName>
        <fullName evidence="2">50S ribosomal protein L4</fullName>
    </alternativeName>
</protein>
<dbReference type="EMBL" id="AE009439">
    <property type="protein sequence ID" value="AAM01629.1"/>
    <property type="molecule type" value="Genomic_DNA"/>
</dbReference>
<dbReference type="RefSeq" id="WP_011018784.1">
    <property type="nucleotide sequence ID" value="NC_003551.1"/>
</dbReference>
<dbReference type="SMR" id="Q8TY91"/>
<dbReference type="FunCoup" id="Q8TY91">
    <property type="interactions" value="168"/>
</dbReference>
<dbReference type="STRING" id="190192.MK0414"/>
<dbReference type="PaxDb" id="190192-MK0414"/>
<dbReference type="EnsemblBacteria" id="AAM01629">
    <property type="protein sequence ID" value="AAM01629"/>
    <property type="gene ID" value="MK0414"/>
</dbReference>
<dbReference type="GeneID" id="1477717"/>
<dbReference type="KEGG" id="mka:MK0414"/>
<dbReference type="PATRIC" id="fig|190192.8.peg.443"/>
<dbReference type="HOGENOM" id="CLU_026535_0_0_2"/>
<dbReference type="InParanoid" id="Q8TY91"/>
<dbReference type="OrthoDB" id="10737at2157"/>
<dbReference type="Proteomes" id="UP000001826">
    <property type="component" value="Chromosome"/>
</dbReference>
<dbReference type="GO" id="GO:1990904">
    <property type="term" value="C:ribonucleoprotein complex"/>
    <property type="evidence" value="ECO:0007669"/>
    <property type="project" value="UniProtKB-KW"/>
</dbReference>
<dbReference type="GO" id="GO:0005840">
    <property type="term" value="C:ribosome"/>
    <property type="evidence" value="ECO:0007669"/>
    <property type="project" value="UniProtKB-KW"/>
</dbReference>
<dbReference type="GO" id="GO:0019843">
    <property type="term" value="F:rRNA binding"/>
    <property type="evidence" value="ECO:0007669"/>
    <property type="project" value="UniProtKB-UniRule"/>
</dbReference>
<dbReference type="GO" id="GO:0003735">
    <property type="term" value="F:structural constituent of ribosome"/>
    <property type="evidence" value="ECO:0007669"/>
    <property type="project" value="InterPro"/>
</dbReference>
<dbReference type="GO" id="GO:0006412">
    <property type="term" value="P:translation"/>
    <property type="evidence" value="ECO:0007669"/>
    <property type="project" value="UniProtKB-UniRule"/>
</dbReference>
<dbReference type="FunFam" id="3.40.1370.10:FF:000011">
    <property type="entry name" value="50S ribosomal protein L4"/>
    <property type="match status" value="1"/>
</dbReference>
<dbReference type="Gene3D" id="3.40.1370.10">
    <property type="match status" value="1"/>
</dbReference>
<dbReference type="HAMAP" id="MF_01328_A">
    <property type="entry name" value="Ribosomal_uL4_A"/>
    <property type="match status" value="1"/>
</dbReference>
<dbReference type="InterPro" id="IPR002136">
    <property type="entry name" value="Ribosomal_uL4"/>
</dbReference>
<dbReference type="InterPro" id="IPR023574">
    <property type="entry name" value="Ribosomal_uL4_dom_sf"/>
</dbReference>
<dbReference type="InterPro" id="IPR013000">
    <property type="entry name" value="Ribosomal_uL4_euk/arc_CS"/>
</dbReference>
<dbReference type="InterPro" id="IPR045240">
    <property type="entry name" value="Ribosomal_uL4_euk/arch"/>
</dbReference>
<dbReference type="InterPro" id="IPR019970">
    <property type="entry name" value="Ribosomall_uL4-arc"/>
</dbReference>
<dbReference type="NCBIfam" id="TIGR03672">
    <property type="entry name" value="rpl4p_arch"/>
    <property type="match status" value="1"/>
</dbReference>
<dbReference type="PANTHER" id="PTHR19431">
    <property type="entry name" value="60S RIBOSOMAL PROTEIN L4"/>
    <property type="match status" value="1"/>
</dbReference>
<dbReference type="Pfam" id="PF00573">
    <property type="entry name" value="Ribosomal_L4"/>
    <property type="match status" value="1"/>
</dbReference>
<dbReference type="SUPFAM" id="SSF52166">
    <property type="entry name" value="Ribosomal protein L4"/>
    <property type="match status" value="1"/>
</dbReference>
<dbReference type="PROSITE" id="PS00939">
    <property type="entry name" value="RIBOSOMAL_L1E"/>
    <property type="match status" value="1"/>
</dbReference>
<gene>
    <name evidence="1" type="primary">rpl4</name>
    <name type="ordered locus">MK0414</name>
</gene>
<reference key="1">
    <citation type="journal article" date="2002" name="Proc. Natl. Acad. Sci. U.S.A.">
        <title>The complete genome of hyperthermophile Methanopyrus kandleri AV19 and monophyly of archaeal methanogens.</title>
        <authorList>
            <person name="Slesarev A.I."/>
            <person name="Mezhevaya K.V."/>
            <person name="Makarova K.S."/>
            <person name="Polushin N.N."/>
            <person name="Shcherbinina O.V."/>
            <person name="Shakhova V.V."/>
            <person name="Belova G.I."/>
            <person name="Aravind L."/>
            <person name="Natale D.A."/>
            <person name="Rogozin I.B."/>
            <person name="Tatusov R.L."/>
            <person name="Wolf Y.I."/>
            <person name="Stetter K.O."/>
            <person name="Malykh A.G."/>
            <person name="Koonin E.V."/>
            <person name="Kozyavkin S.A."/>
        </authorList>
    </citation>
    <scope>NUCLEOTIDE SEQUENCE [LARGE SCALE GENOMIC DNA]</scope>
    <source>
        <strain>AV19 / DSM 6324 / JCM 9639 / NBRC 100938</strain>
    </source>
</reference>
<evidence type="ECO:0000255" key="1">
    <source>
        <dbReference type="HAMAP-Rule" id="MF_01328"/>
    </source>
</evidence>
<evidence type="ECO:0000305" key="2"/>